<accession>P68862</accession>
<accession>P29232</accession>
<keyword id="KW-0067">ATP-binding</keyword>
<keyword id="KW-0963">Cytoplasm</keyword>
<keyword id="KW-0227">DNA damage</keyword>
<keyword id="KW-0234">DNA repair</keyword>
<keyword id="KW-0235">DNA replication</keyword>
<keyword id="KW-0238">DNA-binding</keyword>
<keyword id="KW-0547">Nucleotide-binding</keyword>
<keyword id="KW-0742">SOS response</keyword>
<protein>
    <recommendedName>
        <fullName>DNA replication and repair protein RecF</fullName>
    </recommendedName>
</protein>
<sequence length="370" mass="42415">MKLNTLQLENYRNYDEVTLKCHPDVNILIGENAQGKTNLLESIYTLALAKSHRTSNDKELIRFNADYAKIEGELSYRHGTMPLTMFITKKGKQVKVNHLEQSRLTQYIGHLNVVLFAPEDLNIVKGSPQIRRRFIDMELGQISAVYLNDLAQYQRILKQKNNYLKQLQLGQKKDLTMLEVLNQQFAEYAMKVTDKRAHFIQELESLAKPIHAGITNDKEALSLNYLPSLKFDYAQNEAARLEEIMSILSDNMQREKERGISLFGPHRDDISFDVNGMDAQTYGSQGQQRTTALSIKLAEIELMNIEVGEYPILLLDDVLSELDDSRQTHLLSTIQHKVQTFVTTTSVDGIDHEIMNNAKLYRINQGEIIK</sequence>
<evidence type="ECO:0000250" key="1"/>
<evidence type="ECO:0000255" key="2"/>
<evidence type="ECO:0000305" key="3"/>
<reference key="1">
    <citation type="journal article" date="2001" name="Lancet">
        <title>Whole genome sequencing of meticillin-resistant Staphylococcus aureus.</title>
        <authorList>
            <person name="Kuroda M."/>
            <person name="Ohta T."/>
            <person name="Uchiyama I."/>
            <person name="Baba T."/>
            <person name="Yuzawa H."/>
            <person name="Kobayashi I."/>
            <person name="Cui L."/>
            <person name="Oguchi A."/>
            <person name="Aoki K."/>
            <person name="Nagai Y."/>
            <person name="Lian J.-Q."/>
            <person name="Ito T."/>
            <person name="Kanamori M."/>
            <person name="Matsumaru H."/>
            <person name="Maruyama A."/>
            <person name="Murakami H."/>
            <person name="Hosoyama A."/>
            <person name="Mizutani-Ui Y."/>
            <person name="Takahashi N.K."/>
            <person name="Sawano T."/>
            <person name="Inoue R."/>
            <person name="Kaito C."/>
            <person name="Sekimizu K."/>
            <person name="Hirakawa H."/>
            <person name="Kuhara S."/>
            <person name="Goto S."/>
            <person name="Yabuzaki J."/>
            <person name="Kanehisa M."/>
            <person name="Yamashita A."/>
            <person name="Oshima K."/>
            <person name="Furuya K."/>
            <person name="Yoshino C."/>
            <person name="Shiba T."/>
            <person name="Hattori M."/>
            <person name="Ogasawara N."/>
            <person name="Hayashi H."/>
            <person name="Hiramatsu K."/>
        </authorList>
    </citation>
    <scope>NUCLEOTIDE SEQUENCE [LARGE SCALE GENOMIC DNA]</scope>
    <source>
        <strain>N315</strain>
    </source>
</reference>
<gene>
    <name type="primary">recF</name>
    <name type="ordered locus">SA0004</name>
</gene>
<feature type="chain" id="PRO_0000196458" description="DNA replication and repair protein RecF">
    <location>
        <begin position="1"/>
        <end position="370"/>
    </location>
</feature>
<feature type="binding site" evidence="2">
    <location>
        <begin position="30"/>
        <end position="37"/>
    </location>
    <ligand>
        <name>ATP</name>
        <dbReference type="ChEBI" id="CHEBI:30616"/>
    </ligand>
</feature>
<dbReference type="EMBL" id="BA000018">
    <property type="protein sequence ID" value="BAB41220.1"/>
    <property type="molecule type" value="Genomic_DNA"/>
</dbReference>
<dbReference type="RefSeq" id="WP_000775113.1">
    <property type="nucleotide sequence ID" value="NC_002745.2"/>
</dbReference>
<dbReference type="SMR" id="P68862"/>
<dbReference type="EnsemblBacteria" id="BAB41220">
    <property type="protein sequence ID" value="BAB41220"/>
    <property type="gene ID" value="BAB41220"/>
</dbReference>
<dbReference type="KEGG" id="sau:SA0004"/>
<dbReference type="HOGENOM" id="CLU_040267_0_1_9"/>
<dbReference type="GO" id="GO:0005737">
    <property type="term" value="C:cytoplasm"/>
    <property type="evidence" value="ECO:0007669"/>
    <property type="project" value="UniProtKB-SubCell"/>
</dbReference>
<dbReference type="GO" id="GO:0005524">
    <property type="term" value="F:ATP binding"/>
    <property type="evidence" value="ECO:0007669"/>
    <property type="project" value="UniProtKB-UniRule"/>
</dbReference>
<dbReference type="GO" id="GO:0003697">
    <property type="term" value="F:single-stranded DNA binding"/>
    <property type="evidence" value="ECO:0007669"/>
    <property type="project" value="UniProtKB-UniRule"/>
</dbReference>
<dbReference type="GO" id="GO:0006260">
    <property type="term" value="P:DNA replication"/>
    <property type="evidence" value="ECO:0007669"/>
    <property type="project" value="UniProtKB-UniRule"/>
</dbReference>
<dbReference type="GO" id="GO:0000731">
    <property type="term" value="P:DNA synthesis involved in DNA repair"/>
    <property type="evidence" value="ECO:0007669"/>
    <property type="project" value="TreeGrafter"/>
</dbReference>
<dbReference type="GO" id="GO:0006302">
    <property type="term" value="P:double-strand break repair"/>
    <property type="evidence" value="ECO:0007669"/>
    <property type="project" value="TreeGrafter"/>
</dbReference>
<dbReference type="GO" id="GO:0009432">
    <property type="term" value="P:SOS response"/>
    <property type="evidence" value="ECO:0007669"/>
    <property type="project" value="UniProtKB-UniRule"/>
</dbReference>
<dbReference type="CDD" id="cd03242">
    <property type="entry name" value="ABC_RecF"/>
    <property type="match status" value="1"/>
</dbReference>
<dbReference type="FunFam" id="1.20.1050.90:FF:000002">
    <property type="entry name" value="DNA replication and repair protein RecF"/>
    <property type="match status" value="1"/>
</dbReference>
<dbReference type="Gene3D" id="3.40.50.300">
    <property type="entry name" value="P-loop containing nucleotide triphosphate hydrolases"/>
    <property type="match status" value="1"/>
</dbReference>
<dbReference type="Gene3D" id="1.20.1050.90">
    <property type="entry name" value="RecF/RecN/SMC, N-terminal domain"/>
    <property type="match status" value="1"/>
</dbReference>
<dbReference type="HAMAP" id="MF_00365">
    <property type="entry name" value="RecF"/>
    <property type="match status" value="1"/>
</dbReference>
<dbReference type="InterPro" id="IPR001238">
    <property type="entry name" value="DNA-binding_RecF"/>
</dbReference>
<dbReference type="InterPro" id="IPR018078">
    <property type="entry name" value="DNA-binding_RecF_CS"/>
</dbReference>
<dbReference type="InterPro" id="IPR027417">
    <property type="entry name" value="P-loop_NTPase"/>
</dbReference>
<dbReference type="InterPro" id="IPR003395">
    <property type="entry name" value="RecF/RecN/SMC_N"/>
</dbReference>
<dbReference type="InterPro" id="IPR042174">
    <property type="entry name" value="RecF_2"/>
</dbReference>
<dbReference type="NCBIfam" id="TIGR00611">
    <property type="entry name" value="recf"/>
    <property type="match status" value="1"/>
</dbReference>
<dbReference type="PANTHER" id="PTHR32182">
    <property type="entry name" value="DNA REPLICATION AND REPAIR PROTEIN RECF"/>
    <property type="match status" value="1"/>
</dbReference>
<dbReference type="PANTHER" id="PTHR32182:SF0">
    <property type="entry name" value="DNA REPLICATION AND REPAIR PROTEIN RECF"/>
    <property type="match status" value="1"/>
</dbReference>
<dbReference type="Pfam" id="PF02463">
    <property type="entry name" value="SMC_N"/>
    <property type="match status" value="1"/>
</dbReference>
<dbReference type="SUPFAM" id="SSF52540">
    <property type="entry name" value="P-loop containing nucleoside triphosphate hydrolases"/>
    <property type="match status" value="1"/>
</dbReference>
<dbReference type="PROSITE" id="PS00617">
    <property type="entry name" value="RECF_1"/>
    <property type="match status" value="1"/>
</dbReference>
<dbReference type="PROSITE" id="PS00618">
    <property type="entry name" value="RECF_2"/>
    <property type="match status" value="1"/>
</dbReference>
<proteinExistence type="inferred from homology"/>
<comment type="function">
    <text evidence="1">The RecF protein is involved in DNA metabolism; it is required for DNA replication and normal SOS inducibility. RecF binds preferentially to single-stranded, linear DNA. It also seems to bind ATP (By similarity).</text>
</comment>
<comment type="subcellular location">
    <subcellularLocation>
        <location evidence="1">Cytoplasm</location>
    </subcellularLocation>
</comment>
<comment type="similarity">
    <text evidence="3">Belongs to the RecF family.</text>
</comment>
<name>RECF_STAAN</name>
<organism>
    <name type="scientific">Staphylococcus aureus (strain N315)</name>
    <dbReference type="NCBI Taxonomy" id="158879"/>
    <lineage>
        <taxon>Bacteria</taxon>
        <taxon>Bacillati</taxon>
        <taxon>Bacillota</taxon>
        <taxon>Bacilli</taxon>
        <taxon>Bacillales</taxon>
        <taxon>Staphylococcaceae</taxon>
        <taxon>Staphylococcus</taxon>
    </lineage>
</organism>